<feature type="chain" id="PRO_1000189985" description="Ferrochelatase">
    <location>
        <begin position="1"/>
        <end position="320"/>
    </location>
</feature>
<feature type="binding site" evidence="1">
    <location>
        <position position="194"/>
    </location>
    <ligand>
        <name>Fe cation</name>
        <dbReference type="ChEBI" id="CHEBI:24875"/>
    </ligand>
</feature>
<feature type="binding site" evidence="1">
    <location>
        <position position="275"/>
    </location>
    <ligand>
        <name>Fe cation</name>
        <dbReference type="ChEBI" id="CHEBI:24875"/>
    </ligand>
</feature>
<organism>
    <name type="scientific">Escherichia coli O81 (strain ED1a)</name>
    <dbReference type="NCBI Taxonomy" id="585397"/>
    <lineage>
        <taxon>Bacteria</taxon>
        <taxon>Pseudomonadati</taxon>
        <taxon>Pseudomonadota</taxon>
        <taxon>Gammaproteobacteria</taxon>
        <taxon>Enterobacterales</taxon>
        <taxon>Enterobacteriaceae</taxon>
        <taxon>Escherichia</taxon>
    </lineage>
</organism>
<reference key="1">
    <citation type="journal article" date="2009" name="PLoS Genet.">
        <title>Organised genome dynamics in the Escherichia coli species results in highly diverse adaptive paths.</title>
        <authorList>
            <person name="Touchon M."/>
            <person name="Hoede C."/>
            <person name="Tenaillon O."/>
            <person name="Barbe V."/>
            <person name="Baeriswyl S."/>
            <person name="Bidet P."/>
            <person name="Bingen E."/>
            <person name="Bonacorsi S."/>
            <person name="Bouchier C."/>
            <person name="Bouvet O."/>
            <person name="Calteau A."/>
            <person name="Chiapello H."/>
            <person name="Clermont O."/>
            <person name="Cruveiller S."/>
            <person name="Danchin A."/>
            <person name="Diard M."/>
            <person name="Dossat C."/>
            <person name="Karoui M.E."/>
            <person name="Frapy E."/>
            <person name="Garry L."/>
            <person name="Ghigo J.M."/>
            <person name="Gilles A.M."/>
            <person name="Johnson J."/>
            <person name="Le Bouguenec C."/>
            <person name="Lescat M."/>
            <person name="Mangenot S."/>
            <person name="Martinez-Jehanne V."/>
            <person name="Matic I."/>
            <person name="Nassif X."/>
            <person name="Oztas S."/>
            <person name="Petit M.A."/>
            <person name="Pichon C."/>
            <person name="Rouy Z."/>
            <person name="Ruf C.S."/>
            <person name="Schneider D."/>
            <person name="Tourret J."/>
            <person name="Vacherie B."/>
            <person name="Vallenet D."/>
            <person name="Medigue C."/>
            <person name="Rocha E.P.C."/>
            <person name="Denamur E."/>
        </authorList>
    </citation>
    <scope>NUCLEOTIDE SEQUENCE [LARGE SCALE GENOMIC DNA]</scope>
    <source>
        <strain>ED1a</strain>
    </source>
</reference>
<dbReference type="EC" id="4.98.1.1" evidence="1"/>
<dbReference type="EMBL" id="CU928162">
    <property type="protein sequence ID" value="CAR06708.1"/>
    <property type="molecule type" value="Genomic_DNA"/>
</dbReference>
<dbReference type="RefSeq" id="WP_001250114.1">
    <property type="nucleotide sequence ID" value="NC_011745.1"/>
</dbReference>
<dbReference type="SMR" id="B7MQJ0"/>
<dbReference type="KEGG" id="ecq:ECED1_0498"/>
<dbReference type="HOGENOM" id="CLU_018884_0_0_6"/>
<dbReference type="UniPathway" id="UPA00252">
    <property type="reaction ID" value="UER00325"/>
</dbReference>
<dbReference type="Proteomes" id="UP000000748">
    <property type="component" value="Chromosome"/>
</dbReference>
<dbReference type="GO" id="GO:0005737">
    <property type="term" value="C:cytoplasm"/>
    <property type="evidence" value="ECO:0007669"/>
    <property type="project" value="UniProtKB-SubCell"/>
</dbReference>
<dbReference type="GO" id="GO:0004325">
    <property type="term" value="F:ferrochelatase activity"/>
    <property type="evidence" value="ECO:0007669"/>
    <property type="project" value="UniProtKB-UniRule"/>
</dbReference>
<dbReference type="GO" id="GO:0046872">
    <property type="term" value="F:metal ion binding"/>
    <property type="evidence" value="ECO:0007669"/>
    <property type="project" value="UniProtKB-KW"/>
</dbReference>
<dbReference type="GO" id="GO:0006783">
    <property type="term" value="P:heme biosynthetic process"/>
    <property type="evidence" value="ECO:0007669"/>
    <property type="project" value="UniProtKB-UniRule"/>
</dbReference>
<dbReference type="CDD" id="cd00419">
    <property type="entry name" value="Ferrochelatase_C"/>
    <property type="match status" value="1"/>
</dbReference>
<dbReference type="CDD" id="cd03411">
    <property type="entry name" value="Ferrochelatase_N"/>
    <property type="match status" value="1"/>
</dbReference>
<dbReference type="FunFam" id="3.40.50.1400:FF:000004">
    <property type="entry name" value="Ferrochelatase"/>
    <property type="match status" value="1"/>
</dbReference>
<dbReference type="Gene3D" id="3.40.50.1400">
    <property type="match status" value="2"/>
</dbReference>
<dbReference type="HAMAP" id="MF_00323">
    <property type="entry name" value="Ferrochelatase"/>
    <property type="match status" value="1"/>
</dbReference>
<dbReference type="InterPro" id="IPR001015">
    <property type="entry name" value="Ferrochelatase"/>
</dbReference>
<dbReference type="InterPro" id="IPR019772">
    <property type="entry name" value="Ferrochelatase_AS"/>
</dbReference>
<dbReference type="InterPro" id="IPR033644">
    <property type="entry name" value="Ferrochelatase_C"/>
</dbReference>
<dbReference type="InterPro" id="IPR033659">
    <property type="entry name" value="Ferrochelatase_N"/>
</dbReference>
<dbReference type="NCBIfam" id="TIGR00109">
    <property type="entry name" value="hemH"/>
    <property type="match status" value="1"/>
</dbReference>
<dbReference type="PANTHER" id="PTHR11108">
    <property type="entry name" value="FERROCHELATASE"/>
    <property type="match status" value="1"/>
</dbReference>
<dbReference type="PANTHER" id="PTHR11108:SF1">
    <property type="entry name" value="FERROCHELATASE, MITOCHONDRIAL"/>
    <property type="match status" value="1"/>
</dbReference>
<dbReference type="Pfam" id="PF00762">
    <property type="entry name" value="Ferrochelatase"/>
    <property type="match status" value="1"/>
</dbReference>
<dbReference type="SUPFAM" id="SSF53800">
    <property type="entry name" value="Chelatase"/>
    <property type="match status" value="1"/>
</dbReference>
<dbReference type="PROSITE" id="PS00534">
    <property type="entry name" value="FERROCHELATASE"/>
    <property type="match status" value="1"/>
</dbReference>
<protein>
    <recommendedName>
        <fullName evidence="1">Ferrochelatase</fullName>
        <ecNumber evidence="1">4.98.1.1</ecNumber>
    </recommendedName>
    <alternativeName>
        <fullName evidence="1">Heme synthase</fullName>
    </alternativeName>
    <alternativeName>
        <fullName evidence="1">Protoheme ferro-lyase</fullName>
    </alternativeName>
</protein>
<sequence>MRQTKTGILLANLGTPDAPTPEAVKRYLKQFLSDRRVVDTSRLLWWPLLRGVILPLRSPRVAKLYASVWMEGGSPLMVYSRQQQQALAQRLPETPVALGMSYGSPSLESAVDELLAEHVDHIVVLPLYPQYSCSTVGAVWDELARILARKRSIPGISFIRDYADNHDYINALANSVRASFAKHGEPDLLLLSYHGIPQRYADEGDDYPQRCRTTTRELASALEMAPEKVMMTFQSRFGREPWLMPYTDETLKMLGEKGVGHIQVMCPGFAADCLETLEEIAEQNREVFLGAGGKKYEYIPALNATPEHIEMMANLVAAYR</sequence>
<proteinExistence type="inferred from homology"/>
<comment type="function">
    <text evidence="1">Catalyzes the ferrous insertion into protoporphyrin IX.</text>
</comment>
<comment type="catalytic activity">
    <reaction evidence="1">
        <text>heme b + 2 H(+) = protoporphyrin IX + Fe(2+)</text>
        <dbReference type="Rhea" id="RHEA:22584"/>
        <dbReference type="ChEBI" id="CHEBI:15378"/>
        <dbReference type="ChEBI" id="CHEBI:29033"/>
        <dbReference type="ChEBI" id="CHEBI:57306"/>
        <dbReference type="ChEBI" id="CHEBI:60344"/>
        <dbReference type="EC" id="4.98.1.1"/>
    </reaction>
</comment>
<comment type="pathway">
    <text evidence="1">Porphyrin-containing compound metabolism; protoheme biosynthesis; protoheme from protoporphyrin-IX: step 1/1.</text>
</comment>
<comment type="subunit">
    <text evidence="1">Monomer.</text>
</comment>
<comment type="subcellular location">
    <subcellularLocation>
        <location evidence="1">Cytoplasm</location>
    </subcellularLocation>
</comment>
<comment type="similarity">
    <text evidence="1">Belongs to the ferrochelatase family.</text>
</comment>
<gene>
    <name evidence="1" type="primary">hemH</name>
    <name type="ordered locus">ECED1_0498</name>
</gene>
<keyword id="KW-0963">Cytoplasm</keyword>
<keyword id="KW-0350">Heme biosynthesis</keyword>
<keyword id="KW-0408">Iron</keyword>
<keyword id="KW-0456">Lyase</keyword>
<keyword id="KW-0479">Metal-binding</keyword>
<keyword id="KW-0627">Porphyrin biosynthesis</keyword>
<evidence type="ECO:0000255" key="1">
    <source>
        <dbReference type="HAMAP-Rule" id="MF_00323"/>
    </source>
</evidence>
<name>HEMH_ECO81</name>
<accession>B7MQJ0</accession>